<proteinExistence type="evidence at transcript level"/>
<sequence length="181" mass="20706">MAILLHFGVLITAFLSSHVEGKRDPILYCGACRALVDELLYEIRKVNPKKTVDVGSFRISPDGKQEQNKVPFAKSELYLTDVLEEICEKMNDYGLYVDPTTQEKSYKRFAPRDNEGIGSVDFKNFQFNPEESNSLKYACERVVEEHEDEVLSVITKENDNLADKLCTEETGLCKEYLHNEL</sequence>
<protein>
    <recommendedName>
        <fullName>Protein canopy homolog 1</fullName>
    </recommendedName>
</protein>
<gene>
    <name type="primary">cnpy1</name>
</gene>
<evidence type="ECO:0000250" key="1"/>
<evidence type="ECO:0000255" key="2"/>
<evidence type="ECO:0000255" key="3">
    <source>
        <dbReference type="PROSITE-ProRule" id="PRU10138"/>
    </source>
</evidence>
<evidence type="ECO:0000305" key="4"/>
<dbReference type="EMBL" id="BC088697">
    <property type="protein sequence ID" value="AAH88697.1"/>
    <property type="molecule type" value="mRNA"/>
</dbReference>
<dbReference type="RefSeq" id="NP_001088889.1">
    <property type="nucleotide sequence ID" value="NM_001095420.1"/>
</dbReference>
<dbReference type="SMR" id="Q5M7D4"/>
<dbReference type="DNASU" id="496234"/>
<dbReference type="GeneID" id="496234"/>
<dbReference type="KEGG" id="xla:496234"/>
<dbReference type="AGR" id="Xenbase:XB-GENE-981810"/>
<dbReference type="CTD" id="496234"/>
<dbReference type="Xenbase" id="XB-GENE-981810">
    <property type="gene designation" value="cnpy1.S"/>
</dbReference>
<dbReference type="OMA" id="SWIFHMY"/>
<dbReference type="OrthoDB" id="192915at2759"/>
<dbReference type="Proteomes" id="UP000186698">
    <property type="component" value="Chromosome 6S"/>
</dbReference>
<dbReference type="Bgee" id="496234">
    <property type="expression patterns" value="Expressed in zone of skin and 19 other cell types or tissues"/>
</dbReference>
<dbReference type="GO" id="GO:0005783">
    <property type="term" value="C:endoplasmic reticulum"/>
    <property type="evidence" value="ECO:0000318"/>
    <property type="project" value="GO_Central"/>
</dbReference>
<dbReference type="InterPro" id="IPR042415">
    <property type="entry name" value="CNPY"/>
</dbReference>
<dbReference type="InterPro" id="IPR021852">
    <property type="entry name" value="DUF3456"/>
</dbReference>
<dbReference type="PANTHER" id="PTHR13341:SF4">
    <property type="entry name" value="CANOPY FGF SIGNALING REGULATOR 1"/>
    <property type="match status" value="1"/>
</dbReference>
<dbReference type="PANTHER" id="PTHR13341">
    <property type="entry name" value="MIR-INTERACTING SAPOSIN-LIKE PROTEIN"/>
    <property type="match status" value="1"/>
</dbReference>
<dbReference type="Pfam" id="PF11938">
    <property type="entry name" value="DUF3456"/>
    <property type="match status" value="1"/>
</dbReference>
<dbReference type="PROSITE" id="PS00014">
    <property type="entry name" value="ER_TARGET"/>
    <property type="match status" value="1"/>
</dbReference>
<organism>
    <name type="scientific">Xenopus laevis</name>
    <name type="common">African clawed frog</name>
    <dbReference type="NCBI Taxonomy" id="8355"/>
    <lineage>
        <taxon>Eukaryota</taxon>
        <taxon>Metazoa</taxon>
        <taxon>Chordata</taxon>
        <taxon>Craniata</taxon>
        <taxon>Vertebrata</taxon>
        <taxon>Euteleostomi</taxon>
        <taxon>Amphibia</taxon>
        <taxon>Batrachia</taxon>
        <taxon>Anura</taxon>
        <taxon>Pipoidea</taxon>
        <taxon>Pipidae</taxon>
        <taxon>Xenopodinae</taxon>
        <taxon>Xenopus</taxon>
        <taxon>Xenopus</taxon>
    </lineage>
</organism>
<name>CNPY1_XENLA</name>
<comment type="function">
    <text evidence="1">Plays an role in early embryonic development.</text>
</comment>
<comment type="subcellular location">
    <subcellularLocation>
        <location evidence="3">Endoplasmic reticulum</location>
    </subcellularLocation>
</comment>
<comment type="similarity">
    <text evidence="4">Belongs to the canopy family.</text>
</comment>
<feature type="signal peptide" evidence="2">
    <location>
        <begin position="1"/>
        <end position="21"/>
    </location>
</feature>
<feature type="chain" id="PRO_0000314014" description="Protein canopy homolog 1">
    <location>
        <begin position="22"/>
        <end position="181"/>
    </location>
</feature>
<feature type="domain" description="Saposin B-type">
    <location>
        <begin position="25"/>
        <end position="177"/>
    </location>
</feature>
<feature type="short sequence motif" description="Prevents secretion from ER" evidence="3">
    <location>
        <begin position="178"/>
        <end position="181"/>
    </location>
</feature>
<feature type="disulfide bond" evidence="1">
    <location>
        <begin position="29"/>
        <end position="173"/>
    </location>
</feature>
<feature type="disulfide bond" evidence="1">
    <location>
        <begin position="32"/>
        <end position="166"/>
    </location>
</feature>
<feature type="disulfide bond" evidence="1">
    <location>
        <begin position="87"/>
        <end position="139"/>
    </location>
</feature>
<accession>Q5M7D4</accession>
<reference key="1">
    <citation type="submission" date="2004-12" db="EMBL/GenBank/DDBJ databases">
        <authorList>
            <consortium name="NIH - Xenopus Gene Collection (XGC) project"/>
        </authorList>
    </citation>
    <scope>NUCLEOTIDE SEQUENCE [LARGE SCALE MRNA]</scope>
    <source>
        <tissue>Testis</tissue>
    </source>
</reference>
<keyword id="KW-0217">Developmental protein</keyword>
<keyword id="KW-1015">Disulfide bond</keyword>
<keyword id="KW-0256">Endoplasmic reticulum</keyword>
<keyword id="KW-1185">Reference proteome</keyword>
<keyword id="KW-0732">Signal</keyword>